<name>GATA_CUPNH</name>
<organism>
    <name type="scientific">Cupriavidus necator (strain ATCC 17699 / DSM 428 / KCTC 22496 / NCIMB 10442 / H16 / Stanier 337)</name>
    <name type="common">Ralstonia eutropha</name>
    <dbReference type="NCBI Taxonomy" id="381666"/>
    <lineage>
        <taxon>Bacteria</taxon>
        <taxon>Pseudomonadati</taxon>
        <taxon>Pseudomonadota</taxon>
        <taxon>Betaproteobacteria</taxon>
        <taxon>Burkholderiales</taxon>
        <taxon>Burkholderiaceae</taxon>
        <taxon>Cupriavidus</taxon>
    </lineage>
</organism>
<accession>Q0KFF8</accession>
<keyword id="KW-0067">ATP-binding</keyword>
<keyword id="KW-0436">Ligase</keyword>
<keyword id="KW-0547">Nucleotide-binding</keyword>
<keyword id="KW-0648">Protein biosynthesis</keyword>
<keyword id="KW-1185">Reference proteome</keyword>
<gene>
    <name evidence="1" type="primary">gatA</name>
    <name type="ordered locus">H16_A0111</name>
</gene>
<reference key="1">
    <citation type="journal article" date="2006" name="Nat. Biotechnol.">
        <title>Genome sequence of the bioplastic-producing 'Knallgas' bacterium Ralstonia eutropha H16.</title>
        <authorList>
            <person name="Pohlmann A."/>
            <person name="Fricke W.F."/>
            <person name="Reinecke F."/>
            <person name="Kusian B."/>
            <person name="Liesegang H."/>
            <person name="Cramm R."/>
            <person name="Eitinger T."/>
            <person name="Ewering C."/>
            <person name="Poetter M."/>
            <person name="Schwartz E."/>
            <person name="Strittmatter A."/>
            <person name="Voss I."/>
            <person name="Gottschalk G."/>
            <person name="Steinbuechel A."/>
            <person name="Friedrich B."/>
            <person name="Bowien B."/>
        </authorList>
    </citation>
    <scope>NUCLEOTIDE SEQUENCE [LARGE SCALE GENOMIC DNA]</scope>
    <source>
        <strain>ATCC 17699 / DSM 428 / KCTC 22496 / NCIMB 10442 / H16 / Stanier 337</strain>
    </source>
</reference>
<dbReference type="EC" id="6.3.5.7" evidence="1"/>
<dbReference type="EMBL" id="AM260479">
    <property type="protein sequence ID" value="CAJ91263.1"/>
    <property type="molecule type" value="Genomic_DNA"/>
</dbReference>
<dbReference type="RefSeq" id="WP_010811478.1">
    <property type="nucleotide sequence ID" value="NZ_CP039287.1"/>
</dbReference>
<dbReference type="SMR" id="Q0KFF8"/>
<dbReference type="STRING" id="381666.H16_A0111"/>
<dbReference type="KEGG" id="reh:H16_A0111"/>
<dbReference type="eggNOG" id="COG0154">
    <property type="taxonomic scope" value="Bacteria"/>
</dbReference>
<dbReference type="HOGENOM" id="CLU_009600_0_3_4"/>
<dbReference type="OrthoDB" id="9811471at2"/>
<dbReference type="Proteomes" id="UP000008210">
    <property type="component" value="Chromosome 1"/>
</dbReference>
<dbReference type="GO" id="GO:0030956">
    <property type="term" value="C:glutamyl-tRNA(Gln) amidotransferase complex"/>
    <property type="evidence" value="ECO:0007669"/>
    <property type="project" value="InterPro"/>
</dbReference>
<dbReference type="GO" id="GO:0005524">
    <property type="term" value="F:ATP binding"/>
    <property type="evidence" value="ECO:0007669"/>
    <property type="project" value="UniProtKB-KW"/>
</dbReference>
<dbReference type="GO" id="GO:0050567">
    <property type="term" value="F:glutaminyl-tRNA synthase (glutamine-hydrolyzing) activity"/>
    <property type="evidence" value="ECO:0007669"/>
    <property type="project" value="UniProtKB-UniRule"/>
</dbReference>
<dbReference type="GO" id="GO:0006412">
    <property type="term" value="P:translation"/>
    <property type="evidence" value="ECO:0007669"/>
    <property type="project" value="UniProtKB-UniRule"/>
</dbReference>
<dbReference type="Gene3D" id="3.90.1300.10">
    <property type="entry name" value="Amidase signature (AS) domain"/>
    <property type="match status" value="1"/>
</dbReference>
<dbReference type="HAMAP" id="MF_00120">
    <property type="entry name" value="GatA"/>
    <property type="match status" value="1"/>
</dbReference>
<dbReference type="InterPro" id="IPR000120">
    <property type="entry name" value="Amidase"/>
</dbReference>
<dbReference type="InterPro" id="IPR020556">
    <property type="entry name" value="Amidase_CS"/>
</dbReference>
<dbReference type="InterPro" id="IPR023631">
    <property type="entry name" value="Amidase_dom"/>
</dbReference>
<dbReference type="InterPro" id="IPR036928">
    <property type="entry name" value="AS_sf"/>
</dbReference>
<dbReference type="InterPro" id="IPR004412">
    <property type="entry name" value="GatA"/>
</dbReference>
<dbReference type="InterPro" id="IPR006594">
    <property type="entry name" value="LisH"/>
</dbReference>
<dbReference type="NCBIfam" id="TIGR00132">
    <property type="entry name" value="gatA"/>
    <property type="match status" value="1"/>
</dbReference>
<dbReference type="PANTHER" id="PTHR11895:SF151">
    <property type="entry name" value="GLUTAMYL-TRNA(GLN) AMIDOTRANSFERASE SUBUNIT A"/>
    <property type="match status" value="1"/>
</dbReference>
<dbReference type="PANTHER" id="PTHR11895">
    <property type="entry name" value="TRANSAMIDASE"/>
    <property type="match status" value="1"/>
</dbReference>
<dbReference type="Pfam" id="PF01425">
    <property type="entry name" value="Amidase"/>
    <property type="match status" value="1"/>
</dbReference>
<dbReference type="SUPFAM" id="SSF75304">
    <property type="entry name" value="Amidase signature (AS) enzymes"/>
    <property type="match status" value="1"/>
</dbReference>
<dbReference type="PROSITE" id="PS00571">
    <property type="entry name" value="AMIDASES"/>
    <property type="match status" value="1"/>
</dbReference>
<comment type="function">
    <text evidence="1">Allows the formation of correctly charged Gln-tRNA(Gln) through the transamidation of misacylated Glu-tRNA(Gln) in organisms which lack glutaminyl-tRNA synthetase. The reaction takes place in the presence of glutamine and ATP through an activated gamma-phospho-Glu-tRNA(Gln).</text>
</comment>
<comment type="catalytic activity">
    <reaction evidence="1">
        <text>L-glutamyl-tRNA(Gln) + L-glutamine + ATP + H2O = L-glutaminyl-tRNA(Gln) + L-glutamate + ADP + phosphate + H(+)</text>
        <dbReference type="Rhea" id="RHEA:17521"/>
        <dbReference type="Rhea" id="RHEA-COMP:9681"/>
        <dbReference type="Rhea" id="RHEA-COMP:9684"/>
        <dbReference type="ChEBI" id="CHEBI:15377"/>
        <dbReference type="ChEBI" id="CHEBI:15378"/>
        <dbReference type="ChEBI" id="CHEBI:29985"/>
        <dbReference type="ChEBI" id="CHEBI:30616"/>
        <dbReference type="ChEBI" id="CHEBI:43474"/>
        <dbReference type="ChEBI" id="CHEBI:58359"/>
        <dbReference type="ChEBI" id="CHEBI:78520"/>
        <dbReference type="ChEBI" id="CHEBI:78521"/>
        <dbReference type="ChEBI" id="CHEBI:456216"/>
        <dbReference type="EC" id="6.3.5.7"/>
    </reaction>
</comment>
<comment type="subunit">
    <text evidence="1">Heterotrimer of A, B and C subunits.</text>
</comment>
<comment type="similarity">
    <text evidence="1">Belongs to the amidase family. GatA subfamily.</text>
</comment>
<evidence type="ECO:0000255" key="1">
    <source>
        <dbReference type="HAMAP-Rule" id="MF_00120"/>
    </source>
</evidence>
<protein>
    <recommendedName>
        <fullName evidence="1">Glutamyl-tRNA(Gln) amidotransferase subunit A</fullName>
        <shortName evidence="1">Glu-ADT subunit A</shortName>
        <ecNumber evidence="1">6.3.5.7</ecNumber>
    </recommendedName>
</protein>
<feature type="chain" id="PRO_1000015890" description="Glutamyl-tRNA(Gln) amidotransferase subunit A">
    <location>
        <begin position="1"/>
        <end position="501"/>
    </location>
</feature>
<feature type="active site" description="Charge relay system" evidence="1">
    <location>
        <position position="80"/>
    </location>
</feature>
<feature type="active site" description="Charge relay system" evidence="1">
    <location>
        <position position="155"/>
    </location>
</feature>
<feature type="active site" description="Acyl-ester intermediate" evidence="1">
    <location>
        <position position="179"/>
    </location>
</feature>
<sequence>MPFSADSVTSLRQLADALAARSVSAEELAREYLARIEQAAALNAFIHVDAERTLAQARAADERRARGEAAPLTGVPIAHKDVFVTRGWRATAGSKMLANYESPFDATVVERMAAAGMVTLGKTNMDEFAMGSSNENSHFGPVRNPWDTSRVPGGSSGGSAAAVAAGLAPAATGTDTGGSIRQPSSFSGITGIKPTYGRVSRYGMIAFASSLDQAGPMAHSAEDCALLLNAMAGFDPRDSTSITPAQGGVDEDYTRLLGQPRAGATTERPLAGLRIGLPKEYFGKGLSADVEQAVRAALAEYEKLGATLVEVTLPKTELSIPVYYVIAPAEASSNLSRFDGVRYGHRAAEYRDLLDMYKKSRAEGFGAEVKRRIMVGTYVLSHGYYDAYYLQAQKIRRIIADDFQRAFAQCDVIMGPVAPTVAWKLGEKTSDPVQMYLADIFTLSTSLAGLPGMSVPCGFGEAGMPVGLQLIGNYFDEARLLQTAHAFQQATDWHLRRPGKA</sequence>
<proteinExistence type="inferred from homology"/>